<organism>
    <name type="scientific">Pseudomonas marginalis</name>
    <name type="common">Pseudomonas panacis</name>
    <dbReference type="NCBI Taxonomy" id="298"/>
    <lineage>
        <taxon>Bacteria</taxon>
        <taxon>Pseudomonadati</taxon>
        <taxon>Pseudomonadota</taxon>
        <taxon>Gammaproteobacteria</taxon>
        <taxon>Pseudomonadales</taxon>
        <taxon>Pseudomonadaceae</taxon>
        <taxon>Pseudomonas</taxon>
    </lineage>
</organism>
<protein>
    <recommendedName>
        <fullName>Pectin lyase</fullName>
        <ecNumber>4.2.2.10</ecNumber>
    </recommendedName>
</protein>
<feature type="initiator methionine" description="Removed" evidence="3">
    <location>
        <position position="1"/>
    </location>
</feature>
<feature type="chain" id="PRO_0000212996" description="Pectin lyase">
    <location>
        <begin position="2"/>
        <end position="312"/>
    </location>
</feature>
<feature type="region of interest" description="Disordered" evidence="2">
    <location>
        <begin position="254"/>
        <end position="274"/>
    </location>
</feature>
<feature type="compositionally biased region" description="Polar residues" evidence="2">
    <location>
        <begin position="256"/>
        <end position="274"/>
    </location>
</feature>
<feature type="active site" evidence="1">
    <location>
        <position position="201"/>
    </location>
</feature>
<proteinExistence type="evidence at protein level"/>
<reference key="1">
    <citation type="journal article" date="1992" name="Biochem. Biophys. Res. Commun.">
        <title>Molecular cloning and nucleotide sequence of a pectin lyase gene from Pseudomonas marginalis N6301.</title>
        <authorList>
            <person name="Nikaidou N."/>
            <person name="Kamio Y."/>
            <person name="Izaki K."/>
        </authorList>
    </citation>
    <scope>NUCLEOTIDE SEQUENCE [GENOMIC DNA]</scope>
    <scope>PROTEIN SEQUENCE OF 2-34</scope>
    <source>
        <strain>N6301</strain>
    </source>
</reference>
<keyword id="KW-0903">Direct protein sequencing</keyword>
<keyword id="KW-0456">Lyase</keyword>
<accession>P27027</accession>
<comment type="catalytic activity">
    <reaction>
        <text>Eliminative cleavage of (1-&gt;4)-alpha-D-galacturonan methyl ester to give oligosaccharides with 4-deoxy-6-O-methyl-alpha-D-galact-4-enuronosyl groups at their non-reducing ends.</text>
        <dbReference type="EC" id="4.2.2.10"/>
    </reaction>
</comment>
<comment type="induction">
    <text>By DNA-damaging agents such as mitomycin C.</text>
</comment>
<comment type="similarity">
    <text evidence="4">Belongs to the polysaccharide lyase 1 family.</text>
</comment>
<sequence>MSYPESKLTGLTGFALAAKVTGGWAGPVVSITNLDQLKANIGTVTPQVLVINSNISASSLTKVNMGANKTLIGSFQNRTLENIHLRATAQSQNIILQNLIFKHSANIKANDDIQVYLNYGSKYWIDHCSFVGHSWSTTDGSEDKLLYIGEKADYATISNCFFGSHKYGLIFGHPADDNNAAFNGYPRLTLCHNRFDNMEVRAPGLMRYGYFHVYNNYINKFHLGFTLAQNANILSESNYFGEGSQNNGMLDDKGSGTFTDTNSVPPITNQKSPKAQWTATSNYAYTLKTAAQAKDFTQKNAGAQAAALVFGS</sequence>
<name>PELD_PSEMA</name>
<gene>
    <name type="primary">pnl</name>
</gene>
<dbReference type="EC" id="4.2.2.10"/>
<dbReference type="EMBL" id="D32121">
    <property type="protein sequence ID" value="BAA06847.1"/>
    <property type="molecule type" value="Genomic_DNA"/>
</dbReference>
<dbReference type="PIR" id="JQ1318">
    <property type="entry name" value="JQ1318"/>
</dbReference>
<dbReference type="SMR" id="P27027"/>
<dbReference type="CAZy" id="PL1">
    <property type="family name" value="Polysaccharide Lyase Family 1"/>
</dbReference>
<dbReference type="GO" id="GO:0030570">
    <property type="term" value="F:pectate lyase activity"/>
    <property type="evidence" value="ECO:0007669"/>
    <property type="project" value="InterPro"/>
</dbReference>
<dbReference type="GO" id="GO:0047490">
    <property type="term" value="F:pectin lyase activity"/>
    <property type="evidence" value="ECO:0007669"/>
    <property type="project" value="UniProtKB-EC"/>
</dbReference>
<dbReference type="Gene3D" id="2.160.20.10">
    <property type="entry name" value="Single-stranded right-handed beta-helix, Pectin lyase-like"/>
    <property type="match status" value="1"/>
</dbReference>
<dbReference type="InterPro" id="IPR002022">
    <property type="entry name" value="Pec_lyase"/>
</dbReference>
<dbReference type="InterPro" id="IPR012334">
    <property type="entry name" value="Pectin_lyas_fold"/>
</dbReference>
<dbReference type="InterPro" id="IPR011050">
    <property type="entry name" value="Pectin_lyase_fold/virulence"/>
</dbReference>
<dbReference type="InterPro" id="IPR045032">
    <property type="entry name" value="PEL"/>
</dbReference>
<dbReference type="PANTHER" id="PTHR31683">
    <property type="entry name" value="PECTATE LYASE 18-RELATED"/>
    <property type="match status" value="1"/>
</dbReference>
<dbReference type="PANTHER" id="PTHR31683:SF18">
    <property type="entry name" value="PECTATE LYASE 21-RELATED"/>
    <property type="match status" value="1"/>
</dbReference>
<dbReference type="Pfam" id="PF00544">
    <property type="entry name" value="Pectate_lyase_4"/>
    <property type="match status" value="1"/>
</dbReference>
<dbReference type="SMART" id="SM00656">
    <property type="entry name" value="Amb_all"/>
    <property type="match status" value="1"/>
</dbReference>
<dbReference type="SUPFAM" id="SSF51126">
    <property type="entry name" value="Pectin lyase-like"/>
    <property type="match status" value="1"/>
</dbReference>
<evidence type="ECO:0000255" key="1"/>
<evidence type="ECO:0000256" key="2">
    <source>
        <dbReference type="SAM" id="MobiDB-lite"/>
    </source>
</evidence>
<evidence type="ECO:0000269" key="3">
    <source>
    </source>
</evidence>
<evidence type="ECO:0000305" key="4"/>